<comment type="function">
    <text evidence="1">Secreted tripeptidyl-peptidase which degrades proteins at acidic pHs and is involved in virulence.</text>
</comment>
<comment type="catalytic activity">
    <reaction>
        <text>Release of an N-terminal tripeptide from a polypeptide.</text>
        <dbReference type="EC" id="3.4.14.10"/>
    </reaction>
</comment>
<comment type="cofactor">
    <cofactor evidence="1">
        <name>Ca(2+)</name>
        <dbReference type="ChEBI" id="CHEBI:29108"/>
    </cofactor>
    <text evidence="1">Binds 1 Ca(2+) ion per subunit.</text>
</comment>
<comment type="subcellular location">
    <subcellularLocation>
        <location evidence="1">Secreted</location>
        <location evidence="1">Extracellular space</location>
    </subcellularLocation>
</comment>
<comment type="sequence caution" evidence="3">
    <conflict type="frameshift">
        <sequence resource="EMBL-CDS" id="EFE41373"/>
    </conflict>
</comment>
<sequence>MVSFTLRAIGACLIGLPALITAAPTSHVSNGFHVVEQLNGVPQGWVQEGSPAPSTQMKFKLALVQGKTAEFEQRVMDISNPKHADYGKFMSREELDAFLQPSSQVKDSVFNWLASEGISKRSVKSNTDWLTFTTSIATAEKLFNTRFYTFKNTADGSQIIRTLKYSVAASAAPYVQMVQPTTKFSAPRPELSSVFTSDLEMTSSANVDCNVTITPDCIRELYKMGNTFATKDPRNRLGISGYLEQYARLDDFSTFIDMFVPSLKGTTFDFKSIDGAKNEQNSSLDSVEASLDVDYAIGLSGALSTYYGTAGRGKLIPDLDQPNITENNNEPYIEQLFYLLDLPDSELPAVLSTSYGENEQSVPPTYSSVVCSLFGRLGARGVSVIFSSGDTGVGSACQSNDGKNTTKFNPIFPAACPFVTSVGGTRQINPEVAIHFSSGGFSERFARPWYQELDVRYYLGHELEKGKWDGLYNPHGRGFPDVAAQSYKFATRDHGKTIGVSGTSASAPLFAGVVSILNSIRLAHNKPRMGFLNPWLYTIGRSGFTDIVHGGSDGCTGTDMYSHLPTPYVPGASWNATKGWDPVTGLGTPNFEKLSKLVLI</sequence>
<protein>
    <recommendedName>
        <fullName>Probable tripeptidyl-peptidase SED4</fullName>
        <ecNumber>3.4.14.10</ecNumber>
    </recommendedName>
    <alternativeName>
        <fullName>Sedolisin-D</fullName>
    </alternativeName>
</protein>
<reference key="1">
    <citation type="journal article" date="2011" name="Genome Biol.">
        <title>Comparative and functional genomics provide insights into the pathogenicity of dermatophytic fungi.</title>
        <authorList>
            <person name="Burmester A."/>
            <person name="Shelest E."/>
            <person name="Gloeckner G."/>
            <person name="Heddergott C."/>
            <person name="Schindler S."/>
            <person name="Staib P."/>
            <person name="Heidel A."/>
            <person name="Felder M."/>
            <person name="Petzold A."/>
            <person name="Szafranski K."/>
            <person name="Feuermann M."/>
            <person name="Pedruzzi I."/>
            <person name="Priebe S."/>
            <person name="Groth M."/>
            <person name="Winkler R."/>
            <person name="Li W."/>
            <person name="Kniemeyer O."/>
            <person name="Schroeckh V."/>
            <person name="Hertweck C."/>
            <person name="Hube B."/>
            <person name="White T.C."/>
            <person name="Platzer M."/>
            <person name="Guthke R."/>
            <person name="Heitman J."/>
            <person name="Woestemeyer J."/>
            <person name="Zipfel P.F."/>
            <person name="Monod M."/>
            <person name="Brakhage A.A."/>
        </authorList>
    </citation>
    <scope>NUCLEOTIDE SEQUENCE [LARGE SCALE GENOMIC DNA]</scope>
    <source>
        <strain>HKI 0517</strain>
    </source>
</reference>
<keyword id="KW-0106">Calcium</keyword>
<keyword id="KW-0325">Glycoprotein</keyword>
<keyword id="KW-0378">Hydrolase</keyword>
<keyword id="KW-0479">Metal-binding</keyword>
<keyword id="KW-0645">Protease</keyword>
<keyword id="KW-0964">Secreted</keyword>
<keyword id="KW-0720">Serine protease</keyword>
<keyword id="KW-0732">Signal</keyword>
<keyword id="KW-0843">Virulence</keyword>
<keyword id="KW-0865">Zymogen</keyword>
<gene>
    <name type="primary">SED4</name>
    <name type="ORF">TRV_03885</name>
</gene>
<dbReference type="EC" id="3.4.14.10"/>
<dbReference type="EMBL" id="ACYE01000199">
    <property type="protein sequence ID" value="EFE41373.1"/>
    <property type="status" value="ALT_FRAME"/>
    <property type="molecule type" value="Genomic_DNA"/>
</dbReference>
<dbReference type="RefSeq" id="XP_003021991.1">
    <property type="nucleotide sequence ID" value="XM_003021945.1"/>
</dbReference>
<dbReference type="SMR" id="D4D9U2"/>
<dbReference type="GlyCosmos" id="D4D9U2">
    <property type="glycosylation" value="4 sites, No reported glycans"/>
</dbReference>
<dbReference type="GeneID" id="9578875"/>
<dbReference type="KEGG" id="tve:TRV_03885"/>
<dbReference type="HOGENOM" id="CLU_013783_3_0_1"/>
<dbReference type="OrthoDB" id="484at34384"/>
<dbReference type="Proteomes" id="UP000008383">
    <property type="component" value="Unassembled WGS sequence"/>
</dbReference>
<dbReference type="GO" id="GO:0005576">
    <property type="term" value="C:extracellular region"/>
    <property type="evidence" value="ECO:0007669"/>
    <property type="project" value="UniProtKB-SubCell"/>
</dbReference>
<dbReference type="GO" id="GO:0046872">
    <property type="term" value="F:metal ion binding"/>
    <property type="evidence" value="ECO:0007669"/>
    <property type="project" value="UniProtKB-KW"/>
</dbReference>
<dbReference type="GO" id="GO:0004252">
    <property type="term" value="F:serine-type endopeptidase activity"/>
    <property type="evidence" value="ECO:0007669"/>
    <property type="project" value="InterPro"/>
</dbReference>
<dbReference type="GO" id="GO:0008240">
    <property type="term" value="F:tripeptidyl-peptidase activity"/>
    <property type="evidence" value="ECO:0007669"/>
    <property type="project" value="UniProtKB-EC"/>
</dbReference>
<dbReference type="GO" id="GO:0006508">
    <property type="term" value="P:proteolysis"/>
    <property type="evidence" value="ECO:0007669"/>
    <property type="project" value="UniProtKB-KW"/>
</dbReference>
<dbReference type="CDD" id="cd04056">
    <property type="entry name" value="Peptidases_S53"/>
    <property type="match status" value="1"/>
</dbReference>
<dbReference type="CDD" id="cd11377">
    <property type="entry name" value="Pro-peptidase_S53"/>
    <property type="match status" value="1"/>
</dbReference>
<dbReference type="FunFam" id="3.40.50.200:FF:000015">
    <property type="entry name" value="Tripeptidyl peptidase A"/>
    <property type="match status" value="1"/>
</dbReference>
<dbReference type="Gene3D" id="3.40.50.200">
    <property type="entry name" value="Peptidase S8/S53 domain"/>
    <property type="match status" value="1"/>
</dbReference>
<dbReference type="InterPro" id="IPR000209">
    <property type="entry name" value="Peptidase_S8/S53_dom"/>
</dbReference>
<dbReference type="InterPro" id="IPR036852">
    <property type="entry name" value="Peptidase_S8/S53_dom_sf"/>
</dbReference>
<dbReference type="InterPro" id="IPR023828">
    <property type="entry name" value="Peptidase_S8_Ser-AS"/>
</dbReference>
<dbReference type="InterPro" id="IPR015366">
    <property type="entry name" value="S53_propep"/>
</dbReference>
<dbReference type="InterPro" id="IPR030400">
    <property type="entry name" value="Sedolisin_dom"/>
</dbReference>
<dbReference type="InterPro" id="IPR050819">
    <property type="entry name" value="Tripeptidyl-peptidase_I"/>
</dbReference>
<dbReference type="PANTHER" id="PTHR14218">
    <property type="entry name" value="PROTEASE S8 TRIPEPTIDYL PEPTIDASE I CLN2"/>
    <property type="match status" value="1"/>
</dbReference>
<dbReference type="PANTHER" id="PTHR14218:SF32">
    <property type="entry name" value="TRIPEPTIDYL PEPTIDASE SED3 (AFU_ORTHOLOGUE AFUA_3G08930)"/>
    <property type="match status" value="1"/>
</dbReference>
<dbReference type="Pfam" id="PF00082">
    <property type="entry name" value="Peptidase_S8"/>
    <property type="match status" value="1"/>
</dbReference>
<dbReference type="Pfam" id="PF09286">
    <property type="entry name" value="Pro-kuma_activ"/>
    <property type="match status" value="1"/>
</dbReference>
<dbReference type="SMART" id="SM00944">
    <property type="entry name" value="Pro-kuma_activ"/>
    <property type="match status" value="1"/>
</dbReference>
<dbReference type="SUPFAM" id="SSF54897">
    <property type="entry name" value="Protease propeptides/inhibitors"/>
    <property type="match status" value="1"/>
</dbReference>
<dbReference type="SUPFAM" id="SSF52743">
    <property type="entry name" value="Subtilisin-like"/>
    <property type="match status" value="1"/>
</dbReference>
<dbReference type="PROSITE" id="PS51695">
    <property type="entry name" value="SEDOLISIN"/>
    <property type="match status" value="1"/>
</dbReference>
<organism>
    <name type="scientific">Trichophyton verrucosum (strain HKI 0517)</name>
    <dbReference type="NCBI Taxonomy" id="663202"/>
    <lineage>
        <taxon>Eukaryota</taxon>
        <taxon>Fungi</taxon>
        <taxon>Dikarya</taxon>
        <taxon>Ascomycota</taxon>
        <taxon>Pezizomycotina</taxon>
        <taxon>Eurotiomycetes</taxon>
        <taxon>Eurotiomycetidae</taxon>
        <taxon>Onygenales</taxon>
        <taxon>Arthrodermataceae</taxon>
        <taxon>Trichophyton</taxon>
    </lineage>
</organism>
<feature type="signal peptide" evidence="2">
    <location>
        <begin position="1"/>
        <end position="22"/>
    </location>
</feature>
<feature type="propeptide" id="PRO_0000397837" description="Removed in mature form" evidence="1">
    <location>
        <begin position="23"/>
        <end position="202"/>
    </location>
</feature>
<feature type="chain" id="PRO_0000397838" description="Probable tripeptidyl-peptidase SED4">
    <location>
        <begin position="203"/>
        <end position="600"/>
    </location>
</feature>
<feature type="domain" description="Peptidase S53">
    <location>
        <begin position="212"/>
        <end position="600"/>
    </location>
</feature>
<feature type="active site" description="Charge relay system" evidence="1">
    <location>
        <position position="288"/>
    </location>
</feature>
<feature type="active site" description="Charge relay system" evidence="1">
    <location>
        <position position="292"/>
    </location>
</feature>
<feature type="active site" description="Charge relay system" evidence="1">
    <location>
        <position position="504"/>
    </location>
</feature>
<feature type="binding site" evidence="1">
    <location>
        <position position="546"/>
    </location>
    <ligand>
        <name>Ca(2+)</name>
        <dbReference type="ChEBI" id="CHEBI:29108"/>
    </ligand>
</feature>
<feature type="binding site" evidence="1">
    <location>
        <position position="547"/>
    </location>
    <ligand>
        <name>Ca(2+)</name>
        <dbReference type="ChEBI" id="CHEBI:29108"/>
    </ligand>
</feature>
<feature type="binding site" evidence="1">
    <location>
        <position position="579"/>
    </location>
    <ligand>
        <name>Ca(2+)</name>
        <dbReference type="ChEBI" id="CHEBI:29108"/>
    </ligand>
</feature>
<feature type="binding site" evidence="1">
    <location>
        <position position="581"/>
    </location>
    <ligand>
        <name>Ca(2+)</name>
        <dbReference type="ChEBI" id="CHEBI:29108"/>
    </ligand>
</feature>
<feature type="glycosylation site" description="N-linked (GlcNAc...) asparagine" evidence="2">
    <location>
        <position position="210"/>
    </location>
</feature>
<feature type="glycosylation site" description="N-linked (GlcNAc...) asparagine" evidence="2">
    <location>
        <position position="281"/>
    </location>
</feature>
<feature type="glycosylation site" description="N-linked (GlcNAc...) asparagine" evidence="2">
    <location>
        <position position="323"/>
    </location>
</feature>
<feature type="glycosylation site" description="N-linked (GlcNAc...) asparagine" evidence="2">
    <location>
        <position position="404"/>
    </location>
</feature>
<accession>D4D9U2</accession>
<proteinExistence type="inferred from homology"/>
<name>SED4_TRIVH</name>
<evidence type="ECO:0000250" key="1"/>
<evidence type="ECO:0000255" key="2"/>
<evidence type="ECO:0000305" key="3"/>